<sequence>MTTNYIFVTGGVVSSLGKGIAAASLAAILEARGLNVTMMKLDPYINVDPGTMSPIQHGEVFVTEDGAETDLDLGHYERFIRTKMSRRNNFTTGRIYSDVLRKERRGDYLGATVQVIPHITNAIKERIVAGGEGHDVVLVEIGGTVGDIESLPFLEAIRQLAVDIGREHALFMHLTLVPYMAAAGEVKTKPTQHSVKELLSIGIQPDILICRSDRAVPANERAKIALFCNVAEKAVISLKDVDSIYKIPGLLKSQGLDDYICKRFSLNVPEANLSEWEQVIYEEANPAGEVTIGMVGKYIELPDAYKSVIEALKHGGLKNRVTVNIKLIDSQDVETRGVEILKDLDAILIPGGFGYRGVEGKIATARFARENNIPYLGICLGMQVALIEFARNVVGMENANSTEFVPDCKYPVVALITEWRDEDGNVEVRTEKSDLGGTMRLGAQACQVSEDSLVRKMYGSTTITERHRHRYEVNNMLLKQIEAAGLRIAGRSGDDQLVEIIEVPNHPWFVACQFHPEFTSTPRDGHPLFAGFVKAASEYQKRQAK</sequence>
<keyword id="KW-0067">ATP-binding</keyword>
<keyword id="KW-0315">Glutamine amidotransferase</keyword>
<keyword id="KW-0436">Ligase</keyword>
<keyword id="KW-0460">Magnesium</keyword>
<keyword id="KW-0479">Metal-binding</keyword>
<keyword id="KW-0547">Nucleotide-binding</keyword>
<keyword id="KW-0665">Pyrimidine biosynthesis</keyword>
<comment type="function">
    <text evidence="1">Catalyzes the ATP-dependent amination of UTP to CTP with either L-glutamine or ammonia as the source of nitrogen. Regulates intracellular CTP levels through interactions with the four ribonucleotide triphosphates.</text>
</comment>
<comment type="catalytic activity">
    <reaction evidence="1">
        <text>UTP + L-glutamine + ATP + H2O = CTP + L-glutamate + ADP + phosphate + 2 H(+)</text>
        <dbReference type="Rhea" id="RHEA:26426"/>
        <dbReference type="ChEBI" id="CHEBI:15377"/>
        <dbReference type="ChEBI" id="CHEBI:15378"/>
        <dbReference type="ChEBI" id="CHEBI:29985"/>
        <dbReference type="ChEBI" id="CHEBI:30616"/>
        <dbReference type="ChEBI" id="CHEBI:37563"/>
        <dbReference type="ChEBI" id="CHEBI:43474"/>
        <dbReference type="ChEBI" id="CHEBI:46398"/>
        <dbReference type="ChEBI" id="CHEBI:58359"/>
        <dbReference type="ChEBI" id="CHEBI:456216"/>
        <dbReference type="EC" id="6.3.4.2"/>
    </reaction>
</comment>
<comment type="catalytic activity">
    <reaction evidence="1">
        <text>L-glutamine + H2O = L-glutamate + NH4(+)</text>
        <dbReference type="Rhea" id="RHEA:15889"/>
        <dbReference type="ChEBI" id="CHEBI:15377"/>
        <dbReference type="ChEBI" id="CHEBI:28938"/>
        <dbReference type="ChEBI" id="CHEBI:29985"/>
        <dbReference type="ChEBI" id="CHEBI:58359"/>
    </reaction>
</comment>
<comment type="catalytic activity">
    <reaction evidence="1">
        <text>UTP + NH4(+) + ATP = CTP + ADP + phosphate + 2 H(+)</text>
        <dbReference type="Rhea" id="RHEA:16597"/>
        <dbReference type="ChEBI" id="CHEBI:15378"/>
        <dbReference type="ChEBI" id="CHEBI:28938"/>
        <dbReference type="ChEBI" id="CHEBI:30616"/>
        <dbReference type="ChEBI" id="CHEBI:37563"/>
        <dbReference type="ChEBI" id="CHEBI:43474"/>
        <dbReference type="ChEBI" id="CHEBI:46398"/>
        <dbReference type="ChEBI" id="CHEBI:456216"/>
    </reaction>
</comment>
<comment type="activity regulation">
    <text evidence="1">Allosterically activated by GTP, when glutamine is the substrate; GTP has no effect on the reaction when ammonia is the substrate. The allosteric effector GTP functions by stabilizing the protein conformation that binds the tetrahedral intermediate(s) formed during glutamine hydrolysis. Inhibited by the product CTP, via allosteric rather than competitive inhibition.</text>
</comment>
<comment type="pathway">
    <text evidence="1">Pyrimidine metabolism; CTP biosynthesis via de novo pathway; CTP from UDP: step 2/2.</text>
</comment>
<comment type="subunit">
    <text evidence="1">Homotetramer.</text>
</comment>
<comment type="miscellaneous">
    <text evidence="1">CTPSs have evolved a hybrid strategy for distinguishing between UTP and CTP. The overlapping regions of the product feedback inhibitory and substrate sites recognize a common feature in both compounds, the triphosphate moiety. To differentiate isosteric substrate and product pyrimidine rings, an additional pocket far from the expected kinase/ligase catalytic site, specifically recognizes the cytosine and ribose portions of the product inhibitor.</text>
</comment>
<comment type="similarity">
    <text evidence="1">Belongs to the CTP synthase family.</text>
</comment>
<reference key="1">
    <citation type="journal article" date="2010" name="PLoS Genet.">
        <title>Genome sequence of the plant growth promoting endophytic bacterium Enterobacter sp. 638.</title>
        <authorList>
            <person name="Taghavi S."/>
            <person name="van der Lelie D."/>
            <person name="Hoffman A."/>
            <person name="Zhang Y.B."/>
            <person name="Walla M.D."/>
            <person name="Vangronsveld J."/>
            <person name="Newman L."/>
            <person name="Monchy S."/>
        </authorList>
    </citation>
    <scope>NUCLEOTIDE SEQUENCE [LARGE SCALE GENOMIC DNA]</scope>
    <source>
        <strain>638</strain>
    </source>
</reference>
<evidence type="ECO:0000255" key="1">
    <source>
        <dbReference type="HAMAP-Rule" id="MF_01227"/>
    </source>
</evidence>
<protein>
    <recommendedName>
        <fullName evidence="1">CTP synthase</fullName>
        <ecNumber evidence="1">6.3.4.2</ecNumber>
    </recommendedName>
    <alternativeName>
        <fullName evidence="1">Cytidine 5'-triphosphate synthase</fullName>
    </alternativeName>
    <alternativeName>
        <fullName evidence="1">Cytidine triphosphate synthetase</fullName>
        <shortName evidence="1">CTP synthetase</shortName>
        <shortName evidence="1">CTPS</shortName>
    </alternativeName>
    <alternativeName>
        <fullName evidence="1">UTP--ammonia ligase</fullName>
    </alternativeName>
</protein>
<gene>
    <name evidence="1" type="primary">pyrG</name>
    <name type="ordered locus">Ent638_3234</name>
</gene>
<organism>
    <name type="scientific">Enterobacter sp. (strain 638)</name>
    <dbReference type="NCBI Taxonomy" id="399742"/>
    <lineage>
        <taxon>Bacteria</taxon>
        <taxon>Pseudomonadati</taxon>
        <taxon>Pseudomonadota</taxon>
        <taxon>Gammaproteobacteria</taxon>
        <taxon>Enterobacterales</taxon>
        <taxon>Enterobacteriaceae</taxon>
        <taxon>Enterobacter</taxon>
    </lineage>
</organism>
<dbReference type="EC" id="6.3.4.2" evidence="1"/>
<dbReference type="EMBL" id="CP000653">
    <property type="protein sequence ID" value="ABP61898.1"/>
    <property type="molecule type" value="Genomic_DNA"/>
</dbReference>
<dbReference type="RefSeq" id="WP_015960227.1">
    <property type="nucleotide sequence ID" value="NC_009436.1"/>
</dbReference>
<dbReference type="SMR" id="A4WDW8"/>
<dbReference type="STRING" id="399742.Ent638_3234"/>
<dbReference type="MEROPS" id="C26.964"/>
<dbReference type="GeneID" id="93306192"/>
<dbReference type="KEGG" id="ent:Ent638_3234"/>
<dbReference type="eggNOG" id="COG0504">
    <property type="taxonomic scope" value="Bacteria"/>
</dbReference>
<dbReference type="HOGENOM" id="CLU_011675_5_0_6"/>
<dbReference type="OrthoDB" id="9801107at2"/>
<dbReference type="UniPathway" id="UPA00159">
    <property type="reaction ID" value="UER00277"/>
</dbReference>
<dbReference type="Proteomes" id="UP000000230">
    <property type="component" value="Chromosome"/>
</dbReference>
<dbReference type="GO" id="GO:0005829">
    <property type="term" value="C:cytosol"/>
    <property type="evidence" value="ECO:0007669"/>
    <property type="project" value="TreeGrafter"/>
</dbReference>
<dbReference type="GO" id="GO:0005524">
    <property type="term" value="F:ATP binding"/>
    <property type="evidence" value="ECO:0007669"/>
    <property type="project" value="UniProtKB-KW"/>
</dbReference>
<dbReference type="GO" id="GO:0003883">
    <property type="term" value="F:CTP synthase activity"/>
    <property type="evidence" value="ECO:0007669"/>
    <property type="project" value="UniProtKB-UniRule"/>
</dbReference>
<dbReference type="GO" id="GO:0004359">
    <property type="term" value="F:glutaminase activity"/>
    <property type="evidence" value="ECO:0007669"/>
    <property type="project" value="RHEA"/>
</dbReference>
<dbReference type="GO" id="GO:0042802">
    <property type="term" value="F:identical protein binding"/>
    <property type="evidence" value="ECO:0007669"/>
    <property type="project" value="TreeGrafter"/>
</dbReference>
<dbReference type="GO" id="GO:0046872">
    <property type="term" value="F:metal ion binding"/>
    <property type="evidence" value="ECO:0007669"/>
    <property type="project" value="UniProtKB-KW"/>
</dbReference>
<dbReference type="GO" id="GO:0044210">
    <property type="term" value="P:'de novo' CTP biosynthetic process"/>
    <property type="evidence" value="ECO:0007669"/>
    <property type="project" value="UniProtKB-UniRule"/>
</dbReference>
<dbReference type="GO" id="GO:0019856">
    <property type="term" value="P:pyrimidine nucleobase biosynthetic process"/>
    <property type="evidence" value="ECO:0007669"/>
    <property type="project" value="TreeGrafter"/>
</dbReference>
<dbReference type="CDD" id="cd03113">
    <property type="entry name" value="CTPS_N"/>
    <property type="match status" value="1"/>
</dbReference>
<dbReference type="CDD" id="cd01746">
    <property type="entry name" value="GATase1_CTP_Synthase"/>
    <property type="match status" value="1"/>
</dbReference>
<dbReference type="FunFam" id="3.40.50.300:FF:000009">
    <property type="entry name" value="CTP synthase"/>
    <property type="match status" value="1"/>
</dbReference>
<dbReference type="FunFam" id="3.40.50.880:FF:000002">
    <property type="entry name" value="CTP synthase"/>
    <property type="match status" value="1"/>
</dbReference>
<dbReference type="Gene3D" id="3.40.50.880">
    <property type="match status" value="1"/>
</dbReference>
<dbReference type="Gene3D" id="3.40.50.300">
    <property type="entry name" value="P-loop containing nucleotide triphosphate hydrolases"/>
    <property type="match status" value="1"/>
</dbReference>
<dbReference type="HAMAP" id="MF_01227">
    <property type="entry name" value="PyrG"/>
    <property type="match status" value="1"/>
</dbReference>
<dbReference type="InterPro" id="IPR029062">
    <property type="entry name" value="Class_I_gatase-like"/>
</dbReference>
<dbReference type="InterPro" id="IPR004468">
    <property type="entry name" value="CTP_synthase"/>
</dbReference>
<dbReference type="InterPro" id="IPR017456">
    <property type="entry name" value="CTP_synthase_N"/>
</dbReference>
<dbReference type="InterPro" id="IPR017926">
    <property type="entry name" value="GATASE"/>
</dbReference>
<dbReference type="InterPro" id="IPR033828">
    <property type="entry name" value="GATase1_CTP_Synthase"/>
</dbReference>
<dbReference type="InterPro" id="IPR027417">
    <property type="entry name" value="P-loop_NTPase"/>
</dbReference>
<dbReference type="NCBIfam" id="NF003792">
    <property type="entry name" value="PRK05380.1"/>
    <property type="match status" value="1"/>
</dbReference>
<dbReference type="NCBIfam" id="TIGR00337">
    <property type="entry name" value="PyrG"/>
    <property type="match status" value="1"/>
</dbReference>
<dbReference type="PANTHER" id="PTHR11550">
    <property type="entry name" value="CTP SYNTHASE"/>
    <property type="match status" value="1"/>
</dbReference>
<dbReference type="PANTHER" id="PTHR11550:SF0">
    <property type="entry name" value="CTP SYNTHASE-RELATED"/>
    <property type="match status" value="1"/>
</dbReference>
<dbReference type="Pfam" id="PF06418">
    <property type="entry name" value="CTP_synth_N"/>
    <property type="match status" value="1"/>
</dbReference>
<dbReference type="Pfam" id="PF00117">
    <property type="entry name" value="GATase"/>
    <property type="match status" value="1"/>
</dbReference>
<dbReference type="SUPFAM" id="SSF52317">
    <property type="entry name" value="Class I glutamine amidotransferase-like"/>
    <property type="match status" value="1"/>
</dbReference>
<dbReference type="SUPFAM" id="SSF52540">
    <property type="entry name" value="P-loop containing nucleoside triphosphate hydrolases"/>
    <property type="match status" value="1"/>
</dbReference>
<dbReference type="PROSITE" id="PS51273">
    <property type="entry name" value="GATASE_TYPE_1"/>
    <property type="match status" value="1"/>
</dbReference>
<proteinExistence type="inferred from homology"/>
<name>PYRG_ENT38</name>
<feature type="chain" id="PRO_1000139451" description="CTP synthase">
    <location>
        <begin position="1"/>
        <end position="545"/>
    </location>
</feature>
<feature type="domain" description="Glutamine amidotransferase type-1" evidence="1">
    <location>
        <begin position="291"/>
        <end position="542"/>
    </location>
</feature>
<feature type="region of interest" description="Amidoligase domain" evidence="1">
    <location>
        <begin position="1"/>
        <end position="266"/>
    </location>
</feature>
<feature type="active site" description="Nucleophile; for glutamine hydrolysis" evidence="1">
    <location>
        <position position="379"/>
    </location>
</feature>
<feature type="active site" evidence="1">
    <location>
        <position position="515"/>
    </location>
</feature>
<feature type="active site" evidence="1">
    <location>
        <position position="517"/>
    </location>
</feature>
<feature type="binding site" evidence="1">
    <location>
        <position position="14"/>
    </location>
    <ligand>
        <name>CTP</name>
        <dbReference type="ChEBI" id="CHEBI:37563"/>
        <note>allosteric inhibitor</note>
    </ligand>
</feature>
<feature type="binding site" evidence="1">
    <location>
        <position position="14"/>
    </location>
    <ligand>
        <name>UTP</name>
        <dbReference type="ChEBI" id="CHEBI:46398"/>
    </ligand>
</feature>
<feature type="binding site" evidence="1">
    <location>
        <begin position="15"/>
        <end position="20"/>
    </location>
    <ligand>
        <name>ATP</name>
        <dbReference type="ChEBI" id="CHEBI:30616"/>
    </ligand>
</feature>
<feature type="binding site" evidence="1">
    <location>
        <position position="72"/>
    </location>
    <ligand>
        <name>ATP</name>
        <dbReference type="ChEBI" id="CHEBI:30616"/>
    </ligand>
</feature>
<feature type="binding site" evidence="1">
    <location>
        <position position="72"/>
    </location>
    <ligand>
        <name>Mg(2+)</name>
        <dbReference type="ChEBI" id="CHEBI:18420"/>
    </ligand>
</feature>
<feature type="binding site" evidence="1">
    <location>
        <position position="140"/>
    </location>
    <ligand>
        <name>Mg(2+)</name>
        <dbReference type="ChEBI" id="CHEBI:18420"/>
    </ligand>
</feature>
<feature type="binding site" evidence="1">
    <location>
        <begin position="147"/>
        <end position="149"/>
    </location>
    <ligand>
        <name>CTP</name>
        <dbReference type="ChEBI" id="CHEBI:37563"/>
        <note>allosteric inhibitor</note>
    </ligand>
</feature>
<feature type="binding site" evidence="1">
    <location>
        <begin position="187"/>
        <end position="192"/>
    </location>
    <ligand>
        <name>CTP</name>
        <dbReference type="ChEBI" id="CHEBI:37563"/>
        <note>allosteric inhibitor</note>
    </ligand>
</feature>
<feature type="binding site" evidence="1">
    <location>
        <begin position="187"/>
        <end position="192"/>
    </location>
    <ligand>
        <name>UTP</name>
        <dbReference type="ChEBI" id="CHEBI:46398"/>
    </ligand>
</feature>
<feature type="binding site" evidence="1">
    <location>
        <position position="223"/>
    </location>
    <ligand>
        <name>CTP</name>
        <dbReference type="ChEBI" id="CHEBI:37563"/>
        <note>allosteric inhibitor</note>
    </ligand>
</feature>
<feature type="binding site" evidence="1">
    <location>
        <position position="223"/>
    </location>
    <ligand>
        <name>UTP</name>
        <dbReference type="ChEBI" id="CHEBI:46398"/>
    </ligand>
</feature>
<feature type="binding site" evidence="1">
    <location>
        <begin position="239"/>
        <end position="241"/>
    </location>
    <ligand>
        <name>ATP</name>
        <dbReference type="ChEBI" id="CHEBI:30616"/>
    </ligand>
</feature>
<feature type="binding site" evidence="1">
    <location>
        <position position="352"/>
    </location>
    <ligand>
        <name>L-glutamine</name>
        <dbReference type="ChEBI" id="CHEBI:58359"/>
    </ligand>
</feature>
<feature type="binding site" evidence="1">
    <location>
        <begin position="380"/>
        <end position="383"/>
    </location>
    <ligand>
        <name>L-glutamine</name>
        <dbReference type="ChEBI" id="CHEBI:58359"/>
    </ligand>
</feature>
<feature type="binding site" evidence="1">
    <location>
        <position position="403"/>
    </location>
    <ligand>
        <name>L-glutamine</name>
        <dbReference type="ChEBI" id="CHEBI:58359"/>
    </ligand>
</feature>
<feature type="binding site" evidence="1">
    <location>
        <position position="470"/>
    </location>
    <ligand>
        <name>L-glutamine</name>
        <dbReference type="ChEBI" id="CHEBI:58359"/>
    </ligand>
</feature>
<accession>A4WDW8</accession>